<comment type="function">
    <text evidence="1">Could be a xylanase.</text>
</comment>
<comment type="catalytic activity">
    <reaction>
        <text>Endohydrolysis of (1-&gt;4)-beta-D-xylosidic linkages in xylans.</text>
        <dbReference type="EC" id="3.2.1.8"/>
    </reaction>
</comment>
<comment type="pathway">
    <text>Glycan degradation; xylan degradation.</text>
</comment>
<comment type="similarity">
    <text evidence="4">Belongs to the glycosyl hydrolase 10 (cellulase F) family.</text>
</comment>
<evidence type="ECO:0000250" key="1"/>
<evidence type="ECO:0000255" key="2">
    <source>
        <dbReference type="PROSITE-ProRule" id="PRU01096"/>
    </source>
</evidence>
<evidence type="ECO:0000255" key="3">
    <source>
        <dbReference type="PROSITE-ProRule" id="PRU10061"/>
    </source>
</evidence>
<evidence type="ECO:0000305" key="4"/>
<feature type="chain" id="PRO_0000184068" description="Putative endo-1,4-beta-xylanase">
    <location>
        <begin position="1"/>
        <end position="312"/>
    </location>
</feature>
<feature type="domain" description="GH10" evidence="2">
    <location>
        <begin position="1"/>
        <end position="301"/>
    </location>
</feature>
<feature type="active site" description="Proton donor" evidence="1">
    <location>
        <position position="104"/>
    </location>
</feature>
<feature type="active site" description="Nucleophile" evidence="3">
    <location>
        <position position="216"/>
    </location>
</feature>
<proteinExistence type="inferred from homology"/>
<name>XYN4_CALSA</name>
<organism>
    <name type="scientific">Caldicellulosiruptor saccharolyticus</name>
    <name type="common">Caldocellum saccharolyticum</name>
    <dbReference type="NCBI Taxonomy" id="44001"/>
    <lineage>
        <taxon>Bacteria</taxon>
        <taxon>Bacillati</taxon>
        <taxon>Bacillota</taxon>
        <taxon>Bacillota incertae sedis</taxon>
        <taxon>Caldicellulosiruptorales</taxon>
        <taxon>Caldicellulosiruptoraceae</taxon>
        <taxon>Caldicellulosiruptor</taxon>
    </lineage>
</organism>
<accession>P23557</accession>
<keyword id="KW-0119">Carbohydrate metabolism</keyword>
<keyword id="KW-0326">Glycosidase</keyword>
<keyword id="KW-0378">Hydrolase</keyword>
<keyword id="KW-0624">Polysaccharide degradation</keyword>
<keyword id="KW-0858">Xylan degradation</keyword>
<dbReference type="EC" id="3.2.1.8"/>
<dbReference type="EMBL" id="M34459">
    <property type="protein sequence ID" value="AAA23062.1"/>
    <property type="molecule type" value="Genomic_DNA"/>
</dbReference>
<dbReference type="PIR" id="D37202">
    <property type="entry name" value="D37202"/>
</dbReference>
<dbReference type="SMR" id="P23557"/>
<dbReference type="CAZy" id="GH10">
    <property type="family name" value="Glycoside Hydrolase Family 10"/>
</dbReference>
<dbReference type="OMA" id="MELRCHT"/>
<dbReference type="UniPathway" id="UPA00114"/>
<dbReference type="GO" id="GO:0031176">
    <property type="term" value="F:endo-1,4-beta-xylanase activity"/>
    <property type="evidence" value="ECO:0007669"/>
    <property type="project" value="UniProtKB-EC"/>
</dbReference>
<dbReference type="GO" id="GO:0045493">
    <property type="term" value="P:xylan catabolic process"/>
    <property type="evidence" value="ECO:0007669"/>
    <property type="project" value="UniProtKB-UniPathway"/>
</dbReference>
<dbReference type="Gene3D" id="3.20.20.80">
    <property type="entry name" value="Glycosidases"/>
    <property type="match status" value="1"/>
</dbReference>
<dbReference type="InterPro" id="IPR044846">
    <property type="entry name" value="GH10"/>
</dbReference>
<dbReference type="InterPro" id="IPR031158">
    <property type="entry name" value="GH10_AS"/>
</dbReference>
<dbReference type="InterPro" id="IPR001000">
    <property type="entry name" value="GH10_dom"/>
</dbReference>
<dbReference type="InterPro" id="IPR017853">
    <property type="entry name" value="Glycoside_hydrolase_SF"/>
</dbReference>
<dbReference type="PANTHER" id="PTHR31490:SF90">
    <property type="entry name" value="ENDO-1,4-BETA-XYLANASE A"/>
    <property type="match status" value="1"/>
</dbReference>
<dbReference type="PANTHER" id="PTHR31490">
    <property type="entry name" value="GLYCOSYL HYDROLASE"/>
    <property type="match status" value="1"/>
</dbReference>
<dbReference type="Pfam" id="PF00331">
    <property type="entry name" value="Glyco_hydro_10"/>
    <property type="match status" value="1"/>
</dbReference>
<dbReference type="PRINTS" id="PR00134">
    <property type="entry name" value="GLHYDRLASE10"/>
</dbReference>
<dbReference type="SMART" id="SM00633">
    <property type="entry name" value="Glyco_10"/>
    <property type="match status" value="1"/>
</dbReference>
<dbReference type="SUPFAM" id="SSF51445">
    <property type="entry name" value="(Trans)glycosidases"/>
    <property type="match status" value="1"/>
</dbReference>
<dbReference type="PROSITE" id="PS00591">
    <property type="entry name" value="GH10_1"/>
    <property type="match status" value="1"/>
</dbReference>
<dbReference type="PROSITE" id="PS51760">
    <property type="entry name" value="GH10_2"/>
    <property type="match status" value="1"/>
</dbReference>
<reference key="1">
    <citation type="journal article" date="1990" name="Appl. Environ. Microbiol.">
        <title>Cloning, sequence analysis, and expression of genes encoding xylan-degrading enzymes from the thermophile 'Caldocellum saccharolyticum'.</title>
        <authorList>
            <person name="Luethi E."/>
            <person name="Love D.R."/>
            <person name="McAnulty J."/>
            <person name="Wallace C."/>
            <person name="Caughey P.A."/>
            <person name="Saul D.J."/>
            <person name="Bergquist P.L."/>
        </authorList>
    </citation>
    <scope>NUCLEOTIDE SEQUENCE [GENOMIC DNA]</scope>
</reference>
<sequence length="312" mass="36494">MKQQYLLDYEATKASKNGMPVCKFDSCIPALQFCKENGIKMRGHVLVWHNQTPEWFFHKDYDVSKPLVDAATMERRLESYIKQVIEFCQKNYPGVVYCWDVVNEAILDDGSWREINNNWYTIMKEKYVEKAFYYARKYAKKDVALFYNDYNVFLPAKREAIYNLAQKLKEKGLIDGLGLQPTVGLNYPELDSDDIDSFKTTLETFAKLGLQIHITELNFEIKGDESNRTPENLKKQADRYYEMMKLLLKEDTDNGGPCNITCVTVFGICDDYPLYKNFKQCMYLWDKNCNPKPCFYSFLQAGLDWKASLLSK</sequence>
<protein>
    <recommendedName>
        <fullName>Putative endo-1,4-beta-xylanase</fullName>
        <shortName>Xylanase</shortName>
        <ecNumber>3.2.1.8</ecNumber>
    </recommendedName>
    <alternativeName>
        <fullName>1,4-beta-D-xylan xylanohydrolase</fullName>
    </alternativeName>
    <alternativeName>
        <fullName>ORF4</fullName>
    </alternativeName>
</protein>